<dbReference type="EC" id="1.5.1.2" evidence="1"/>
<dbReference type="EMBL" id="CP000046">
    <property type="protein sequence ID" value="AAW36739.1"/>
    <property type="molecule type" value="Genomic_DNA"/>
</dbReference>
<dbReference type="RefSeq" id="WP_000779748.1">
    <property type="nucleotide sequence ID" value="NZ_JBGOFO010000003.1"/>
</dbReference>
<dbReference type="SMR" id="Q5HFR9"/>
<dbReference type="KEGG" id="sac:SACOL1546"/>
<dbReference type="HOGENOM" id="CLU_042344_0_1_9"/>
<dbReference type="UniPathway" id="UPA00098">
    <property type="reaction ID" value="UER00361"/>
</dbReference>
<dbReference type="Proteomes" id="UP000000530">
    <property type="component" value="Chromosome"/>
</dbReference>
<dbReference type="GO" id="GO:0005737">
    <property type="term" value="C:cytoplasm"/>
    <property type="evidence" value="ECO:0007669"/>
    <property type="project" value="UniProtKB-SubCell"/>
</dbReference>
<dbReference type="GO" id="GO:0004735">
    <property type="term" value="F:pyrroline-5-carboxylate reductase activity"/>
    <property type="evidence" value="ECO:0007669"/>
    <property type="project" value="UniProtKB-UniRule"/>
</dbReference>
<dbReference type="GO" id="GO:0055129">
    <property type="term" value="P:L-proline biosynthetic process"/>
    <property type="evidence" value="ECO:0007669"/>
    <property type="project" value="UniProtKB-UniRule"/>
</dbReference>
<dbReference type="FunFam" id="1.10.3730.10:FF:000001">
    <property type="entry name" value="Pyrroline-5-carboxylate reductase"/>
    <property type="match status" value="1"/>
</dbReference>
<dbReference type="Gene3D" id="3.40.50.720">
    <property type="entry name" value="NAD(P)-binding Rossmann-like Domain"/>
    <property type="match status" value="1"/>
</dbReference>
<dbReference type="Gene3D" id="1.10.3730.10">
    <property type="entry name" value="ProC C-terminal domain-like"/>
    <property type="match status" value="1"/>
</dbReference>
<dbReference type="HAMAP" id="MF_01925">
    <property type="entry name" value="P5C_reductase"/>
    <property type="match status" value="1"/>
</dbReference>
<dbReference type="InterPro" id="IPR008927">
    <property type="entry name" value="6-PGluconate_DH-like_C_sf"/>
</dbReference>
<dbReference type="InterPro" id="IPR036291">
    <property type="entry name" value="NAD(P)-bd_dom_sf"/>
</dbReference>
<dbReference type="InterPro" id="IPR028939">
    <property type="entry name" value="P5C_Rdtase_cat_N"/>
</dbReference>
<dbReference type="InterPro" id="IPR029036">
    <property type="entry name" value="P5CR_dimer"/>
</dbReference>
<dbReference type="InterPro" id="IPR000304">
    <property type="entry name" value="Pyrroline-COOH_reductase"/>
</dbReference>
<dbReference type="NCBIfam" id="TIGR00112">
    <property type="entry name" value="proC"/>
    <property type="match status" value="1"/>
</dbReference>
<dbReference type="PANTHER" id="PTHR11645">
    <property type="entry name" value="PYRROLINE-5-CARBOXYLATE REDUCTASE"/>
    <property type="match status" value="1"/>
</dbReference>
<dbReference type="PANTHER" id="PTHR11645:SF0">
    <property type="entry name" value="PYRROLINE-5-CARBOXYLATE REDUCTASE 3"/>
    <property type="match status" value="1"/>
</dbReference>
<dbReference type="Pfam" id="PF03807">
    <property type="entry name" value="F420_oxidored"/>
    <property type="match status" value="1"/>
</dbReference>
<dbReference type="Pfam" id="PF14748">
    <property type="entry name" value="P5CR_dimer"/>
    <property type="match status" value="1"/>
</dbReference>
<dbReference type="PIRSF" id="PIRSF000193">
    <property type="entry name" value="Pyrrol-5-carb_rd"/>
    <property type="match status" value="1"/>
</dbReference>
<dbReference type="SUPFAM" id="SSF48179">
    <property type="entry name" value="6-phosphogluconate dehydrogenase C-terminal domain-like"/>
    <property type="match status" value="1"/>
</dbReference>
<dbReference type="SUPFAM" id="SSF51735">
    <property type="entry name" value="NAD(P)-binding Rossmann-fold domains"/>
    <property type="match status" value="1"/>
</dbReference>
<proteinExistence type="inferred from homology"/>
<name>P5CR_STAAC</name>
<feature type="chain" id="PRO_0000187298" description="Pyrroline-5-carboxylate reductase">
    <location>
        <begin position="1"/>
        <end position="271"/>
    </location>
</feature>
<evidence type="ECO:0000255" key="1">
    <source>
        <dbReference type="HAMAP-Rule" id="MF_01925"/>
    </source>
</evidence>
<comment type="function">
    <text evidence="1">Catalyzes the reduction of 1-pyrroline-5-carboxylate (PCA) to L-proline.</text>
</comment>
<comment type="catalytic activity">
    <reaction evidence="1">
        <text>L-proline + NADP(+) = (S)-1-pyrroline-5-carboxylate + NADPH + 2 H(+)</text>
        <dbReference type="Rhea" id="RHEA:14109"/>
        <dbReference type="ChEBI" id="CHEBI:15378"/>
        <dbReference type="ChEBI" id="CHEBI:17388"/>
        <dbReference type="ChEBI" id="CHEBI:57783"/>
        <dbReference type="ChEBI" id="CHEBI:58349"/>
        <dbReference type="ChEBI" id="CHEBI:60039"/>
        <dbReference type="EC" id="1.5.1.2"/>
    </reaction>
</comment>
<comment type="catalytic activity">
    <reaction evidence="1">
        <text>L-proline + NAD(+) = (S)-1-pyrroline-5-carboxylate + NADH + 2 H(+)</text>
        <dbReference type="Rhea" id="RHEA:14105"/>
        <dbReference type="ChEBI" id="CHEBI:15378"/>
        <dbReference type="ChEBI" id="CHEBI:17388"/>
        <dbReference type="ChEBI" id="CHEBI:57540"/>
        <dbReference type="ChEBI" id="CHEBI:57945"/>
        <dbReference type="ChEBI" id="CHEBI:60039"/>
        <dbReference type="EC" id="1.5.1.2"/>
    </reaction>
</comment>
<comment type="pathway">
    <text evidence="1">Amino-acid biosynthesis; L-proline biosynthesis; L-proline from L-glutamate 5-semialdehyde: step 1/1.</text>
</comment>
<comment type="subcellular location">
    <subcellularLocation>
        <location evidence="1">Cytoplasm</location>
    </subcellularLocation>
</comment>
<comment type="similarity">
    <text evidence="1">Belongs to the pyrroline-5-carboxylate reductase family.</text>
</comment>
<reference key="1">
    <citation type="journal article" date="2005" name="J. Bacteriol.">
        <title>Insights on evolution of virulence and resistance from the complete genome analysis of an early methicillin-resistant Staphylococcus aureus strain and a biofilm-producing methicillin-resistant Staphylococcus epidermidis strain.</title>
        <authorList>
            <person name="Gill S.R."/>
            <person name="Fouts D.E."/>
            <person name="Archer G.L."/>
            <person name="Mongodin E.F."/>
            <person name="DeBoy R.T."/>
            <person name="Ravel J."/>
            <person name="Paulsen I.T."/>
            <person name="Kolonay J.F."/>
            <person name="Brinkac L.M."/>
            <person name="Beanan M.J."/>
            <person name="Dodson R.J."/>
            <person name="Daugherty S.C."/>
            <person name="Madupu R."/>
            <person name="Angiuoli S.V."/>
            <person name="Durkin A.S."/>
            <person name="Haft D.H."/>
            <person name="Vamathevan J.J."/>
            <person name="Khouri H."/>
            <person name="Utterback T.R."/>
            <person name="Lee C."/>
            <person name="Dimitrov G."/>
            <person name="Jiang L."/>
            <person name="Qin H."/>
            <person name="Weidman J."/>
            <person name="Tran K."/>
            <person name="Kang K.H."/>
            <person name="Hance I.R."/>
            <person name="Nelson K.E."/>
            <person name="Fraser C.M."/>
        </authorList>
    </citation>
    <scope>NUCLEOTIDE SEQUENCE [LARGE SCALE GENOMIC DNA]</scope>
    <source>
        <strain>COL</strain>
    </source>
</reference>
<keyword id="KW-0028">Amino-acid biosynthesis</keyword>
<keyword id="KW-0963">Cytoplasm</keyword>
<keyword id="KW-0521">NADP</keyword>
<keyword id="KW-0560">Oxidoreductase</keyword>
<keyword id="KW-0641">Proline biosynthesis</keyword>
<organism>
    <name type="scientific">Staphylococcus aureus (strain COL)</name>
    <dbReference type="NCBI Taxonomy" id="93062"/>
    <lineage>
        <taxon>Bacteria</taxon>
        <taxon>Bacillati</taxon>
        <taxon>Bacillota</taxon>
        <taxon>Bacilli</taxon>
        <taxon>Bacillales</taxon>
        <taxon>Staphylococcaceae</taxon>
        <taxon>Staphylococcus</taxon>
    </lineage>
</organism>
<sequence length="271" mass="29840">MKLVFYGAGNMAQAIFTGIINSSNLDANDIYLTNKSNEQALKAFAEKLGVNYSYDDATLLKDADYVFLGTKPHDFDALATRIKPHITKDNCFISIMAGIPIDYIKQQLECQNPVARIMPNTNAQVGHSVTGISFSNNFDPKSKDEINDLVKAFGSVIEVSEDHLHQVTAITGSGPAFLYHVFEQYVKAGTKLGLEKEQVEESIRNLIIGTSKMIERSDLSMAQLRKNITSKGGTTQAGLDTLSQYDLVSIFEDCLNAAVDRSIELSNIEDQ</sequence>
<gene>
    <name evidence="1" type="primary">proC</name>
    <name type="ordered locus">SACOL1546</name>
</gene>
<protein>
    <recommendedName>
        <fullName evidence="1">Pyrroline-5-carboxylate reductase</fullName>
        <shortName evidence="1">P5C reductase</shortName>
        <shortName evidence="1">P5CR</shortName>
        <ecNumber evidence="1">1.5.1.2</ecNumber>
    </recommendedName>
    <alternativeName>
        <fullName evidence="1">PCA reductase</fullName>
    </alternativeName>
</protein>
<accession>Q5HFR9</accession>